<dbReference type="EC" id="6.3.2.9" evidence="2"/>
<dbReference type="EMBL" id="AM408590">
    <property type="protein sequence ID" value="CAL72160.1"/>
    <property type="status" value="ALT_INIT"/>
    <property type="molecule type" value="Genomic_DNA"/>
</dbReference>
<dbReference type="SMR" id="A1KKJ8"/>
<dbReference type="KEGG" id="mbb:BCG_2172c"/>
<dbReference type="HOGENOM" id="CLU_032540_0_0_11"/>
<dbReference type="UniPathway" id="UPA00219"/>
<dbReference type="Proteomes" id="UP000001472">
    <property type="component" value="Chromosome"/>
</dbReference>
<dbReference type="GO" id="GO:0005737">
    <property type="term" value="C:cytoplasm"/>
    <property type="evidence" value="ECO:0007669"/>
    <property type="project" value="UniProtKB-SubCell"/>
</dbReference>
<dbReference type="GO" id="GO:0005524">
    <property type="term" value="F:ATP binding"/>
    <property type="evidence" value="ECO:0007669"/>
    <property type="project" value="UniProtKB-UniRule"/>
</dbReference>
<dbReference type="GO" id="GO:0008764">
    <property type="term" value="F:UDP-N-acetylmuramoylalanine-D-glutamate ligase activity"/>
    <property type="evidence" value="ECO:0007669"/>
    <property type="project" value="UniProtKB-UniRule"/>
</dbReference>
<dbReference type="GO" id="GO:0051301">
    <property type="term" value="P:cell division"/>
    <property type="evidence" value="ECO:0007669"/>
    <property type="project" value="UniProtKB-KW"/>
</dbReference>
<dbReference type="GO" id="GO:0071555">
    <property type="term" value="P:cell wall organization"/>
    <property type="evidence" value="ECO:0007669"/>
    <property type="project" value="UniProtKB-KW"/>
</dbReference>
<dbReference type="GO" id="GO:0009252">
    <property type="term" value="P:peptidoglycan biosynthetic process"/>
    <property type="evidence" value="ECO:0007669"/>
    <property type="project" value="UniProtKB-UniRule"/>
</dbReference>
<dbReference type="GO" id="GO:0008360">
    <property type="term" value="P:regulation of cell shape"/>
    <property type="evidence" value="ECO:0007669"/>
    <property type="project" value="UniProtKB-KW"/>
</dbReference>
<dbReference type="Gene3D" id="3.90.190.20">
    <property type="entry name" value="Mur ligase, C-terminal domain"/>
    <property type="match status" value="1"/>
</dbReference>
<dbReference type="Gene3D" id="3.40.1190.10">
    <property type="entry name" value="Mur-like, catalytic domain"/>
    <property type="match status" value="1"/>
</dbReference>
<dbReference type="Gene3D" id="3.40.50.720">
    <property type="entry name" value="NAD(P)-binding Rossmann-like Domain"/>
    <property type="match status" value="1"/>
</dbReference>
<dbReference type="HAMAP" id="MF_00639">
    <property type="entry name" value="MurD"/>
    <property type="match status" value="1"/>
</dbReference>
<dbReference type="InterPro" id="IPR036565">
    <property type="entry name" value="Mur-like_cat_sf"/>
</dbReference>
<dbReference type="InterPro" id="IPR004101">
    <property type="entry name" value="Mur_ligase_C"/>
</dbReference>
<dbReference type="InterPro" id="IPR036615">
    <property type="entry name" value="Mur_ligase_C_dom_sf"/>
</dbReference>
<dbReference type="InterPro" id="IPR013221">
    <property type="entry name" value="Mur_ligase_cen"/>
</dbReference>
<dbReference type="InterPro" id="IPR005762">
    <property type="entry name" value="MurD"/>
</dbReference>
<dbReference type="NCBIfam" id="TIGR01087">
    <property type="entry name" value="murD"/>
    <property type="match status" value="1"/>
</dbReference>
<dbReference type="PANTHER" id="PTHR43692">
    <property type="entry name" value="UDP-N-ACETYLMURAMOYLALANINE--D-GLUTAMATE LIGASE"/>
    <property type="match status" value="1"/>
</dbReference>
<dbReference type="PANTHER" id="PTHR43692:SF1">
    <property type="entry name" value="UDP-N-ACETYLMURAMOYLALANINE--D-GLUTAMATE LIGASE"/>
    <property type="match status" value="1"/>
</dbReference>
<dbReference type="Pfam" id="PF02875">
    <property type="entry name" value="Mur_ligase_C"/>
    <property type="match status" value="1"/>
</dbReference>
<dbReference type="Pfam" id="PF08245">
    <property type="entry name" value="Mur_ligase_M"/>
    <property type="match status" value="1"/>
</dbReference>
<dbReference type="SUPFAM" id="SSF51984">
    <property type="entry name" value="MurCD N-terminal domain"/>
    <property type="match status" value="1"/>
</dbReference>
<dbReference type="SUPFAM" id="SSF53623">
    <property type="entry name" value="MurD-like peptide ligases, catalytic domain"/>
    <property type="match status" value="1"/>
</dbReference>
<dbReference type="SUPFAM" id="SSF53244">
    <property type="entry name" value="MurD-like peptide ligases, peptide-binding domain"/>
    <property type="match status" value="1"/>
</dbReference>
<keyword id="KW-0067">ATP-binding</keyword>
<keyword id="KW-0131">Cell cycle</keyword>
<keyword id="KW-0132">Cell division</keyword>
<keyword id="KW-0133">Cell shape</keyword>
<keyword id="KW-0961">Cell wall biogenesis/degradation</keyword>
<keyword id="KW-0963">Cytoplasm</keyword>
<keyword id="KW-0436">Ligase</keyword>
<keyword id="KW-0547">Nucleotide-binding</keyword>
<keyword id="KW-0573">Peptidoglycan synthesis</keyword>
<feature type="chain" id="PRO_0000301438" description="UDP-N-acetylmuramoylalanine--D-glutamate ligase">
    <location>
        <begin position="1"/>
        <end position="496"/>
    </location>
</feature>
<feature type="binding site" evidence="2">
    <location>
        <begin position="130"/>
        <end position="136"/>
    </location>
    <ligand>
        <name>ATP</name>
        <dbReference type="ChEBI" id="CHEBI:30616"/>
    </ligand>
</feature>
<protein>
    <recommendedName>
        <fullName evidence="2">UDP-N-acetylmuramoylalanine--D-glutamate ligase</fullName>
        <ecNumber evidence="2">6.3.2.9</ecNumber>
    </recommendedName>
    <alternativeName>
        <fullName evidence="2">D-glutamic acid-adding enzyme</fullName>
    </alternativeName>
    <alternativeName>
        <fullName evidence="2">UDP-N-acetylmuramoyl-L-alanyl-D-glutamate synthetase</fullName>
    </alternativeName>
</protein>
<comment type="function">
    <text evidence="2">Cell wall formation. Catalyzes the addition of glutamate to the nucleotide precursor UDP-N-acetylmuramoyl-L-alanine (UMA).</text>
</comment>
<comment type="catalytic activity">
    <reaction evidence="2">
        <text>UDP-N-acetyl-alpha-D-muramoyl-L-alanine + D-glutamate + ATP = UDP-N-acetyl-alpha-D-muramoyl-L-alanyl-D-glutamate + ADP + phosphate + H(+)</text>
        <dbReference type="Rhea" id="RHEA:16429"/>
        <dbReference type="ChEBI" id="CHEBI:15378"/>
        <dbReference type="ChEBI" id="CHEBI:29986"/>
        <dbReference type="ChEBI" id="CHEBI:30616"/>
        <dbReference type="ChEBI" id="CHEBI:43474"/>
        <dbReference type="ChEBI" id="CHEBI:83898"/>
        <dbReference type="ChEBI" id="CHEBI:83900"/>
        <dbReference type="ChEBI" id="CHEBI:456216"/>
        <dbReference type="EC" id="6.3.2.9"/>
    </reaction>
</comment>
<comment type="pathway">
    <text evidence="2">Cell wall biogenesis; peptidoglycan biosynthesis.</text>
</comment>
<comment type="subcellular location">
    <subcellularLocation>
        <location evidence="2">Cytoplasm</location>
    </subcellularLocation>
</comment>
<comment type="similarity">
    <text evidence="2">Belongs to the MurCDEF family.</text>
</comment>
<comment type="sequence caution" evidence="1">
    <conflict type="erroneous initiation">
        <sequence resource="EMBL-CDS" id="CAL72160"/>
    </conflict>
    <text>Truncated N-terminus.</text>
</comment>
<name>MURD_MYCBP</name>
<reference key="1">
    <citation type="journal article" date="2007" name="Proc. Natl. Acad. Sci. U.S.A.">
        <title>Genome plasticity of BCG and impact on vaccine efficacy.</title>
        <authorList>
            <person name="Brosch R."/>
            <person name="Gordon S.V."/>
            <person name="Garnier T."/>
            <person name="Eiglmeier K."/>
            <person name="Frigui W."/>
            <person name="Valenti P."/>
            <person name="Dos Santos S."/>
            <person name="Duthoy S."/>
            <person name="Lacroix C."/>
            <person name="Garcia-Pelayo C."/>
            <person name="Inwald J.K."/>
            <person name="Golby P."/>
            <person name="Garcia J.N."/>
            <person name="Hewinson R.G."/>
            <person name="Behr M.A."/>
            <person name="Quail M.A."/>
            <person name="Churcher C."/>
            <person name="Barrell B.G."/>
            <person name="Parkhill J."/>
            <person name="Cole S.T."/>
        </authorList>
    </citation>
    <scope>NUCLEOTIDE SEQUENCE [LARGE SCALE GENOMIC DNA]</scope>
    <source>
        <strain>BCG / Pasteur 1173P2</strain>
    </source>
</reference>
<sequence length="496" mass="50255">MSGLPRSVPDVLDPLGPGAPVLVAGGRVTGQAVAAVLTRFGATPTVCDDDPVMLRPHAERGLPTVSSSDAVQQITGYALVVASPGFSPATPLLAAAAAAGVPIWGDVELAWRLDAAGCYGPPRSWLVVTGTNGKTTTTSMLHAMLIAGGRRAVLCGNIGSAVLDVLDEPAELLAVELSSFQLHWAPSLRPEAGAVLNIAEDHLDWHATMAEYTAAKARVLTGGVAVAGLDDSRAAALLDGSPAQVRVGFRLGEPAAGELGVRDAHLVDRAFSDDLTLLPVASIPVPGPVGVLDALAAAALARSVGVPAGAIADAVTSFRVGRHRAEVVAVADGITYVDDSKATNPHAARASVLAYPRVVWIAGGLLKGASLHAEVAAMASRLVGAVLIGRDRAAVAEALSRHAPDVPVVQVVAGEDTGMPATVEVPVACVLDVAKDDKAGETVGAAVMTAAVAAARRMAQPGDTVLLAPAGASFDQFTGYADRGEAFATAVRAVIR</sequence>
<organism>
    <name type="scientific">Mycobacterium bovis (strain BCG / Pasteur 1173P2)</name>
    <dbReference type="NCBI Taxonomy" id="410289"/>
    <lineage>
        <taxon>Bacteria</taxon>
        <taxon>Bacillati</taxon>
        <taxon>Actinomycetota</taxon>
        <taxon>Actinomycetes</taxon>
        <taxon>Mycobacteriales</taxon>
        <taxon>Mycobacteriaceae</taxon>
        <taxon>Mycobacterium</taxon>
        <taxon>Mycobacterium tuberculosis complex</taxon>
    </lineage>
</organism>
<proteinExistence type="inferred from homology"/>
<gene>
    <name evidence="2" type="primary">murD</name>
    <name type="ordered locus">BCG_2172c</name>
</gene>
<accession>A1KKJ8</accession>
<evidence type="ECO:0000250" key="1">
    <source>
        <dbReference type="UniProtKB" id="P9WJL5"/>
    </source>
</evidence>
<evidence type="ECO:0000255" key="2">
    <source>
        <dbReference type="HAMAP-Rule" id="MF_00639"/>
    </source>
</evidence>